<evidence type="ECO:0000305" key="1"/>
<organism>
    <name type="scientific">Homo sapiens</name>
    <name type="common">Human</name>
    <dbReference type="NCBI Taxonomy" id="9606"/>
    <lineage>
        <taxon>Eukaryota</taxon>
        <taxon>Metazoa</taxon>
        <taxon>Chordata</taxon>
        <taxon>Craniata</taxon>
        <taxon>Vertebrata</taxon>
        <taxon>Euteleostomi</taxon>
        <taxon>Mammalia</taxon>
        <taxon>Eutheria</taxon>
        <taxon>Euarchontoglires</taxon>
        <taxon>Primates</taxon>
        <taxon>Haplorrhini</taxon>
        <taxon>Catarrhini</taxon>
        <taxon>Hominidae</taxon>
        <taxon>Homo</taxon>
    </lineage>
</organism>
<feature type="chain" id="PRO_0000392541" description="Putative uncharacterized protein C5orf58">
    <location>
        <begin position="1"/>
        <end position="81"/>
    </location>
</feature>
<sequence>MGKKRVTDHKLNVDKVIKNINTISSELKKIKELSQLLLCDLILHFNHPIKTENLAEAERNNPLFEESKISDVSLVSNSFSI</sequence>
<reference key="1">
    <citation type="journal article" date="2004" name="Nature">
        <title>The DNA sequence and comparative analysis of human chromosome 5.</title>
        <authorList>
            <person name="Schmutz J."/>
            <person name="Martin J."/>
            <person name="Terry A."/>
            <person name="Couronne O."/>
            <person name="Grimwood J."/>
            <person name="Lowry S."/>
            <person name="Gordon L.A."/>
            <person name="Scott D."/>
            <person name="Xie G."/>
            <person name="Huang W."/>
            <person name="Hellsten U."/>
            <person name="Tran-Gyamfi M."/>
            <person name="She X."/>
            <person name="Prabhakar S."/>
            <person name="Aerts A."/>
            <person name="Altherr M."/>
            <person name="Bajorek E."/>
            <person name="Black S."/>
            <person name="Branscomb E."/>
            <person name="Caoile C."/>
            <person name="Challacombe J.F."/>
            <person name="Chan Y.M."/>
            <person name="Denys M."/>
            <person name="Detter J.C."/>
            <person name="Escobar J."/>
            <person name="Flowers D."/>
            <person name="Fotopulos D."/>
            <person name="Glavina T."/>
            <person name="Gomez M."/>
            <person name="Gonzales E."/>
            <person name="Goodstein D."/>
            <person name="Grigoriev I."/>
            <person name="Groza M."/>
            <person name="Hammon N."/>
            <person name="Hawkins T."/>
            <person name="Haydu L."/>
            <person name="Israni S."/>
            <person name="Jett J."/>
            <person name="Kadner K."/>
            <person name="Kimball H."/>
            <person name="Kobayashi A."/>
            <person name="Lopez F."/>
            <person name="Lou Y."/>
            <person name="Martinez D."/>
            <person name="Medina C."/>
            <person name="Morgan J."/>
            <person name="Nandkeshwar R."/>
            <person name="Noonan J.P."/>
            <person name="Pitluck S."/>
            <person name="Pollard M."/>
            <person name="Predki P."/>
            <person name="Priest J."/>
            <person name="Ramirez L."/>
            <person name="Retterer J."/>
            <person name="Rodriguez A."/>
            <person name="Rogers S."/>
            <person name="Salamov A."/>
            <person name="Salazar A."/>
            <person name="Thayer N."/>
            <person name="Tice H."/>
            <person name="Tsai M."/>
            <person name="Ustaszewska A."/>
            <person name="Vo N."/>
            <person name="Wheeler J."/>
            <person name="Wu K."/>
            <person name="Yang J."/>
            <person name="Dickson M."/>
            <person name="Cheng J.-F."/>
            <person name="Eichler E.E."/>
            <person name="Olsen A."/>
            <person name="Pennacchio L.A."/>
            <person name="Rokhsar D.S."/>
            <person name="Richardson P."/>
            <person name="Lucas S.M."/>
            <person name="Myers R.M."/>
            <person name="Rubin E.M."/>
        </authorList>
    </citation>
    <scope>NUCLEOTIDE SEQUENCE [LARGE SCALE GENOMIC DNA]</scope>
</reference>
<reference key="2">
    <citation type="submission" date="2005-09" db="EMBL/GenBank/DDBJ databases">
        <authorList>
            <person name="Mural R.J."/>
            <person name="Istrail S."/>
            <person name="Sutton G.G."/>
            <person name="Florea L."/>
            <person name="Halpern A.L."/>
            <person name="Mobarry C.M."/>
            <person name="Lippert R."/>
            <person name="Walenz B."/>
            <person name="Shatkay H."/>
            <person name="Dew I."/>
            <person name="Miller J.R."/>
            <person name="Flanigan M.J."/>
            <person name="Edwards N.J."/>
            <person name="Bolanos R."/>
            <person name="Fasulo D."/>
            <person name="Halldorsson B.V."/>
            <person name="Hannenhalli S."/>
            <person name="Turner R."/>
            <person name="Yooseph S."/>
            <person name="Lu F."/>
            <person name="Nusskern D.R."/>
            <person name="Shue B.C."/>
            <person name="Zheng X.H."/>
            <person name="Zhong F."/>
            <person name="Delcher A.L."/>
            <person name="Huson D.H."/>
            <person name="Kravitz S.A."/>
            <person name="Mouchard L."/>
            <person name="Reinert K."/>
            <person name="Remington K.A."/>
            <person name="Clark A.G."/>
            <person name="Waterman M.S."/>
            <person name="Eichler E.E."/>
            <person name="Adams M.D."/>
            <person name="Hunkapiller M.W."/>
            <person name="Myers E.W."/>
            <person name="Venter J.C."/>
        </authorList>
    </citation>
    <scope>NUCLEOTIDE SEQUENCE [LARGE SCALE GENOMIC DNA]</scope>
</reference>
<reference key="3">
    <citation type="journal article" date="2004" name="Genome Res.">
        <title>The status, quality, and expansion of the NIH full-length cDNA project: the Mammalian Gene Collection (MGC).</title>
        <authorList>
            <consortium name="The MGC Project Team"/>
        </authorList>
    </citation>
    <scope>NUCLEOTIDE SEQUENCE [LARGE SCALE MRNA]</scope>
    <source>
        <tissue>Testis</tissue>
    </source>
</reference>
<comment type="sequence caution" evidence="1">
    <conflict type="erroneous gene model prediction">
        <sequence resource="EMBL-CDS" id="EAW61482"/>
    </conflict>
</comment>
<dbReference type="EMBL" id="AC008660">
    <property type="status" value="NOT_ANNOTATED_CDS"/>
    <property type="molecule type" value="Genomic_DNA"/>
</dbReference>
<dbReference type="EMBL" id="AC034199">
    <property type="status" value="NOT_ANNOTATED_CDS"/>
    <property type="molecule type" value="Genomic_DNA"/>
</dbReference>
<dbReference type="EMBL" id="CH471062">
    <property type="protein sequence ID" value="EAW61482.1"/>
    <property type="status" value="ALT_SEQ"/>
    <property type="molecule type" value="Genomic_DNA"/>
</dbReference>
<dbReference type="EMBL" id="BC092511">
    <property type="status" value="NOT_ANNOTATED_CDS"/>
    <property type="molecule type" value="mRNA"/>
</dbReference>
<dbReference type="CCDS" id="CCDS47338.1"/>
<dbReference type="RefSeq" id="NP_001096079.2">
    <property type="nucleotide sequence ID" value="NM_001102609.3"/>
</dbReference>
<dbReference type="RefSeq" id="NP_001292322.2">
    <property type="nucleotide sequence ID" value="NM_001305393.2"/>
</dbReference>
<dbReference type="RefSeq" id="NP_001292323.2">
    <property type="nucleotide sequence ID" value="NM_001305394.2"/>
</dbReference>
<dbReference type="RefSeq" id="XP_016864520.1">
    <property type="nucleotide sequence ID" value="XM_017009031.1"/>
</dbReference>
<dbReference type="RefSeq" id="XP_016864521.1">
    <property type="nucleotide sequence ID" value="XM_017009032.1"/>
</dbReference>
<dbReference type="RefSeq" id="XP_016864522.1">
    <property type="nucleotide sequence ID" value="XM_017009033.1"/>
</dbReference>
<dbReference type="RefSeq" id="XP_047272668.1">
    <property type="nucleotide sequence ID" value="XM_047416712.1"/>
</dbReference>
<dbReference type="RefSeq" id="XP_054207584.1">
    <property type="nucleotide sequence ID" value="XM_054351609.1"/>
</dbReference>
<dbReference type="SMR" id="C9J3I9"/>
<dbReference type="BioGRID" id="126376">
    <property type="interactions" value="1"/>
</dbReference>
<dbReference type="IntAct" id="C9J3I9">
    <property type="interactions" value="1"/>
</dbReference>
<dbReference type="STRING" id="9606.ENSP00000490013"/>
<dbReference type="iPTMnet" id="C9J3I9"/>
<dbReference type="PhosphoSitePlus" id="C9J3I9"/>
<dbReference type="BioMuta" id="C5orf58"/>
<dbReference type="MassIVE" id="C9J3I9"/>
<dbReference type="PaxDb" id="9606-ENSP00000471984"/>
<dbReference type="PeptideAtlas" id="C9J3I9"/>
<dbReference type="DNASU" id="133874"/>
<dbReference type="Ensembl" id="ENST00000593851.5">
    <property type="protein sequence ID" value="ENSP00000490013.2"/>
    <property type="gene ID" value="ENSG00000234511.11"/>
</dbReference>
<dbReference type="GeneID" id="133874"/>
<dbReference type="KEGG" id="hsa:133874"/>
<dbReference type="MANE-Select" id="ENST00000593851.5">
    <property type="protein sequence ID" value="ENSP00000490013.2"/>
    <property type="RefSeq nucleotide sequence ID" value="NM_001102609.3"/>
    <property type="RefSeq protein sequence ID" value="NP_001096079.2"/>
</dbReference>
<dbReference type="UCSC" id="uc010jjn.4">
    <property type="organism name" value="human"/>
</dbReference>
<dbReference type="AGR" id="HGNC:37272"/>
<dbReference type="CTD" id="133874"/>
<dbReference type="GeneCards" id="C5orf58"/>
<dbReference type="HGNC" id="HGNC:37272">
    <property type="gene designation" value="C5orf58"/>
</dbReference>
<dbReference type="HPA" id="ENSG00000234511">
    <property type="expression patterns" value="Tissue enriched (testis)"/>
</dbReference>
<dbReference type="neXtProt" id="NX_C9J3I9"/>
<dbReference type="OpenTargets" id="ENSG00000234511"/>
<dbReference type="PharmGKB" id="PA165660204"/>
<dbReference type="VEuPathDB" id="HostDB:ENSG00000234511"/>
<dbReference type="eggNOG" id="ENOG502T0DB">
    <property type="taxonomic scope" value="Eukaryota"/>
</dbReference>
<dbReference type="GeneTree" id="ENSGT00560000078585"/>
<dbReference type="InParanoid" id="C9J3I9"/>
<dbReference type="OMA" id="HPVKTDD"/>
<dbReference type="OrthoDB" id="9448568at2759"/>
<dbReference type="PAN-GO" id="C9J3I9">
    <property type="GO annotations" value="0 GO annotations based on evolutionary models"/>
</dbReference>
<dbReference type="PhylomeDB" id="C9J3I9"/>
<dbReference type="PathwayCommons" id="C9J3I9"/>
<dbReference type="SignaLink" id="C9J3I9"/>
<dbReference type="BioGRID-ORCS" id="133874">
    <property type="hits" value="13 hits in 938 CRISPR screens"/>
</dbReference>
<dbReference type="ChiTaRS" id="C5orf58">
    <property type="organism name" value="human"/>
</dbReference>
<dbReference type="GenomeRNAi" id="133874"/>
<dbReference type="Pharos" id="C9J3I9">
    <property type="development level" value="Tdark"/>
</dbReference>
<dbReference type="PRO" id="PR:C9J3I9"/>
<dbReference type="Proteomes" id="UP000005640">
    <property type="component" value="Chromosome 5"/>
</dbReference>
<dbReference type="RNAct" id="C9J3I9">
    <property type="molecule type" value="protein"/>
</dbReference>
<dbReference type="Bgee" id="ENSG00000234511">
    <property type="expression patterns" value="Expressed in right testis and 98 other cell types or tissues"/>
</dbReference>
<dbReference type="ExpressionAtlas" id="C9J3I9">
    <property type="expression patterns" value="baseline and differential"/>
</dbReference>
<keyword id="KW-1267">Proteomics identification</keyword>
<keyword id="KW-1185">Reference proteome</keyword>
<protein>
    <recommendedName>
        <fullName>Putative uncharacterized protein C5orf58</fullName>
    </recommendedName>
</protein>
<accession>C9J3I9</accession>
<gene>
    <name type="primary">C5orf58</name>
</gene>
<proteinExistence type="evidence at protein level"/>
<name>CE058_HUMAN</name>